<organism>
    <name type="scientific">Boiga dendrophila</name>
    <name type="common">Mangrove snake</name>
    <name type="synonym">Gold-ringed cat snake</name>
    <dbReference type="NCBI Taxonomy" id="46286"/>
    <lineage>
        <taxon>Eukaryota</taxon>
        <taxon>Metazoa</taxon>
        <taxon>Chordata</taxon>
        <taxon>Craniata</taxon>
        <taxon>Vertebrata</taxon>
        <taxon>Euteleostomi</taxon>
        <taxon>Lepidosauria</taxon>
        <taxon>Squamata</taxon>
        <taxon>Bifurcata</taxon>
        <taxon>Unidentata</taxon>
        <taxon>Episquamata</taxon>
        <taxon>Toxicofera</taxon>
        <taxon>Serpentes</taxon>
        <taxon>Colubroidea</taxon>
        <taxon>Colubridae</taxon>
        <taxon>Colubrinae</taxon>
        <taxon>Boiga</taxon>
    </lineage>
</organism>
<accession>P0C603</accession>
<reference key="1">
    <citation type="journal article" date="2003" name="Rapid Commun. Mass Spectrom.">
        <title>Analysis of Colubroidea snake venoms by liquid chromatography with mass spectrometry: evolutionary and toxinological implications.</title>
        <authorList>
            <person name="Fry B.G."/>
            <person name="Wuster W."/>
            <person name="Ryan Ramjan S.F."/>
            <person name="Jackson T."/>
            <person name="Martelli P."/>
            <person name="Kini R.M."/>
        </authorList>
    </citation>
    <scope>PROTEIN SEQUENCE</scope>
    <scope>MASS SPECTROMETRY</scope>
    <scope>SUBCELLULAR LOCATION</scope>
    <source>
        <tissue>Venom</tissue>
    </source>
</reference>
<reference key="2">
    <citation type="journal article" date="2005" name="Toxicon">
        <title>Pharmacological characterisation of a neurotoxin from the venom of Boiga dendrophila (mangrove catsnake).</title>
        <authorList>
            <person name="Lumsden N.G."/>
            <person name="Fry B.G."/>
            <person name="Ventura S."/>
            <person name="Kini R.M."/>
            <person name="Hodgson W.C."/>
        </authorList>
    </citation>
    <scope>FUNCTION</scope>
    <source>
        <tissue>Venom</tissue>
    </source>
</reference>
<name>3NBA_BOIDE</name>
<keyword id="KW-0008">Acetylcholine receptor inhibiting toxin</keyword>
<keyword id="KW-0903">Direct protein sequencing</keyword>
<keyword id="KW-1015">Disulfide bond</keyword>
<keyword id="KW-0872">Ion channel impairing toxin</keyword>
<keyword id="KW-0528">Neurotoxin</keyword>
<keyword id="KW-0629">Postsynaptic neurotoxin</keyword>
<keyword id="KW-0638">Presynaptic neurotoxin</keyword>
<keyword id="KW-0873">Pyrrolidone carboxylic acid</keyword>
<keyword id="KW-0964">Secreted</keyword>
<keyword id="KW-0800">Toxin</keyword>
<proteinExistence type="evidence at protein level"/>
<sequence length="47" mass="5259">QAIGLPHTACIQCNRKTSSKCLSGQICLPYHMTCYTLYKPDENGELK</sequence>
<evidence type="ECO:0000250" key="1"/>
<evidence type="ECO:0000250" key="2">
    <source>
        <dbReference type="UniProtKB" id="P81782"/>
    </source>
</evidence>
<evidence type="ECO:0000269" key="3">
    <source>
    </source>
</evidence>
<evidence type="ECO:0000269" key="4">
    <source>
    </source>
</evidence>
<evidence type="ECO:0000303" key="5">
    <source>
    </source>
</evidence>
<evidence type="ECO:0000305" key="6"/>
<evidence type="ECO:0000305" key="7">
    <source>
    </source>
</evidence>
<feature type="chain" id="PRO_0000313787" description="Boigatoxin-A" evidence="3">
    <location>
        <begin position="1"/>
        <end position="47" status="greater than"/>
    </location>
</feature>
<feature type="modified residue" description="Pyrrolidone carboxylic acid" evidence="1">
    <location>
        <position position="1"/>
    </location>
</feature>
<feature type="disulfide bond" evidence="2">
    <location>
        <begin position="10"/>
        <end position="34"/>
    </location>
</feature>
<feature type="disulfide bond" evidence="2">
    <location>
        <begin position="13"/>
        <end position="21"/>
    </location>
</feature>
<feature type="disulfide bond" evidence="2">
    <location>
        <begin position="27"/>
        <end status="unknown"/>
    </location>
</feature>
<feature type="non-terminal residue">
    <location>
        <position position="47"/>
    </location>
</feature>
<protein>
    <recommendedName>
        <fullName evidence="5">Boigatoxin-A</fullName>
    </recommendedName>
</protein>
<comment type="function">
    <text evidence="4">This toxin may inhibit nicotinic acetylcholine receptor (nAChR). It has poorly reversible postsynaptic blocking activity in a chick muscle preparation and readily reversible inhibitory activity at a presynaptic site in the rat vas deferens prostatic segment most likely to prevent the release of neurotransmitters.</text>
</comment>
<comment type="subunit">
    <text evidence="1">Monomer.</text>
</comment>
<comment type="subcellular location">
    <subcellularLocation>
        <location evidence="3">Secreted</location>
    </subcellularLocation>
</comment>
<comment type="tissue specificity">
    <text evidence="7">Expressed by the venom gland.</text>
</comment>
<comment type="mass spectrometry" mass="8769.0" method="Electrospray" evidence="3"/>
<comment type="similarity">
    <text evidence="6">Belongs to the three-finger toxin family. Ancestral subfamily. Boigatoxin sub-subfamily.</text>
</comment>
<dbReference type="SMR" id="P0C603"/>
<dbReference type="GO" id="GO:0005576">
    <property type="term" value="C:extracellular region"/>
    <property type="evidence" value="ECO:0007669"/>
    <property type="project" value="UniProtKB-SubCell"/>
</dbReference>
<dbReference type="GO" id="GO:0030550">
    <property type="term" value="F:acetylcholine receptor inhibitor activity"/>
    <property type="evidence" value="ECO:0007669"/>
    <property type="project" value="UniProtKB-KW"/>
</dbReference>
<dbReference type="GO" id="GO:0099106">
    <property type="term" value="F:ion channel regulator activity"/>
    <property type="evidence" value="ECO:0007669"/>
    <property type="project" value="UniProtKB-KW"/>
</dbReference>
<dbReference type="GO" id="GO:0090729">
    <property type="term" value="F:toxin activity"/>
    <property type="evidence" value="ECO:0007669"/>
    <property type="project" value="UniProtKB-KW"/>
</dbReference>
<dbReference type="Gene3D" id="2.10.60.10">
    <property type="entry name" value="CD59"/>
    <property type="match status" value="1"/>
</dbReference>
<dbReference type="InterPro" id="IPR045860">
    <property type="entry name" value="Snake_toxin-like_sf"/>
</dbReference>